<evidence type="ECO:0000250" key="1"/>
<evidence type="ECO:0000250" key="2">
    <source>
        <dbReference type="UniProtKB" id="Q13322"/>
    </source>
</evidence>
<evidence type="ECO:0000250" key="3">
    <source>
        <dbReference type="UniProtKB" id="Q60760"/>
    </source>
</evidence>
<evidence type="ECO:0000255" key="4">
    <source>
        <dbReference type="PROSITE-ProRule" id="PRU00145"/>
    </source>
</evidence>
<evidence type="ECO:0000255" key="5">
    <source>
        <dbReference type="PROSITE-ProRule" id="PRU00166"/>
    </source>
</evidence>
<evidence type="ECO:0000255" key="6">
    <source>
        <dbReference type="PROSITE-ProRule" id="PRU00191"/>
    </source>
</evidence>
<evidence type="ECO:0000256" key="7">
    <source>
        <dbReference type="SAM" id="MobiDB-lite"/>
    </source>
</evidence>
<evidence type="ECO:0000303" key="8">
    <source ref="1"/>
</evidence>
<evidence type="ECO:0000305" key="9"/>
<sequence>MALAGGPDSFLHHPYYQDQVEQTSPHHPRDLAGPGFPAQPDRLAPHQEDDVDLEALVNDMDASLESLCSASETAPLLHNGQHARGPPPPGARPLRPQASPRHRVPRSQPLHILAARRLQEEDQQFRTSSLPAIPNPFPELCGPGSPPVLSPGSLPPGQAAAKQDVKVFSEDGTCKVVEILADMTARDLCQLLVYRSHCVDDNSWTLVEHHPHLGLERGLEDHERVTQVQHTLASESKFLFRKNYAKYEFFKNPTNFFPEQMVTWCQQSNGSQTQLLQNFLNSSSCPEIQGFLHVKELGRKSWKKLYVCLRRSGLYCSTKGASKEPRHLQLLADLEDSSIFSLIAGRKQYGAPTDYGFCIKPNRVRTEAKELRLLCAEDEQSRTCWMTAFRLLKYGMLLYQNYRVPQQRKAVLSPFSAPVRSVSENSLVAMDFSGQTGRVIENPAEAQSAALEEGHAWRKRSTRMNILGSQSPLHPSTLSTVIHRTQHWFHGRISREESHRIIKQQGLVDGLFLLRDSQSNPKAFVLTLCHHQKIKNFQILPCEDDGQTFFSLDDGNTKFSDLIQLVDFYQLNKGVLPCKLKHHCIRVAL</sequence>
<gene>
    <name type="primary">Grb10</name>
</gene>
<proteinExistence type="evidence at transcript level"/>
<protein>
    <recommendedName>
        <fullName>Growth factor receptor-bound protein 10</fullName>
    </recommendedName>
    <alternativeName>
        <fullName>GRB10 adapter protein</fullName>
    </alternativeName>
</protein>
<accession>B5KFD7</accession>
<accession>B5KFD3</accession>
<accession>B5KFD4</accession>
<accession>B5KFD6</accession>
<keyword id="KW-0025">Alternative splicing</keyword>
<keyword id="KW-0963">Cytoplasm</keyword>
<keyword id="KW-0597">Phosphoprotein</keyword>
<keyword id="KW-1185">Reference proteome</keyword>
<keyword id="KW-0727">SH2 domain</keyword>
<comment type="function">
    <text evidence="1">Adapter protein which modulates coupling of a number of cell surface receptor kinases with specific signaling pathways. Binds to, and suppress signals from, activated receptors tyrosine kinases, including the insulin (INSR) and insulin-like growth factor (IGF1R) receptors. The inhibitory effect can be achieved by 2 mechanisms: interference with the signaling pathway and increased receptor degradation. Delays and reduces AKT1 phosphorylation in response to insulin stimulation. Blocks association between INSR and IRS1 and IRS2 and prevents insulin-stimulated IRS1 and IRS2 tyrosine phosphorylation. Recruits NEDD4 to IGF1R, leading to IGF1R ubiquitination, increased internalization and degradation by both the proteasomal and lysosomal pathways. A similar role in the mediation of ubiquitination also has been suggested with INSR. Negatively regulates Wnt signaling by interacting with LRP6 intracellular portion and interfering with the binding of AXIN1 to LRP6. Positive regulator of the KDR/VEGFR-2 signaling pathway. May inhibit NEDD4-mediated degradation of KDR/VEGFR-2 (By similarity).</text>
</comment>
<comment type="activity regulation">
    <text evidence="1">Phosphorylation by mTORC1 stabilizes and activates GRB10 constituting a feedback pathway by which mTORC1 inhibits INSR-dependent signaling.</text>
</comment>
<comment type="subunit">
    <text evidence="1">Interacts with ligand-activated tyrosine kinase receptors, including FGFR1, INSR, IGF1R, MET and PDGFRB in a phosphotyrosine-dependent manner through the SH2 domain. Poorly binds to the EGFR. Directly interacts with MAP3K14/NIK and is recruited to the EGFR-ERBB2 complex. Interacts with GIGYF1/PERQ1 and GIGYF2/TNRC15. When unphosphorylated, interacts with AKT1 and when phosphorylated with YWHAE/14-3-3 epsilon. Interacts with NEDD4. Interacts with LRP6, thus interfering with the binding of AXIN1 to LRP6. Binds relatively non-specifically to several phosphoinositides, including PI(5)P, PI(4,5)P2, PI(3,4)P2 and PI(3,4,5)P3, with modest affinities through the PH domain. Binds to activated NRAS (By similarity).</text>
</comment>
<comment type="subcellular location">
    <subcellularLocation>
        <location evidence="1">Cytoplasm</location>
    </subcellularLocation>
</comment>
<comment type="alternative products">
    <event type="alternative splicing"/>
    <isoform>
        <id>B5KFD7-1</id>
        <name>1</name>
        <sequence type="displayed"/>
    </isoform>
    <isoform>
        <id>B5KFD7-2</id>
        <name>2</name>
        <sequence type="described" ref="VSP_038785"/>
    </isoform>
    <isoform>
        <id>B5KFD7-3</id>
        <name>3</name>
        <sequence type="described" ref="VSP_038785 VSP_038786 VSP_038787"/>
    </isoform>
    <isoform>
        <id>B5KFD7-4</id>
        <name>4</name>
        <sequence type="described" ref="VSP_038786 VSP_038787"/>
    </isoform>
</comment>
<comment type="PTM">
    <text evidence="1">Phosphorylated on serine residues upon EGF, FGF and PDGF stimulation.</text>
</comment>
<comment type="similarity">
    <text evidence="9">Belongs to the GRB7/10/14 family.</text>
</comment>
<name>GRB10_PIG</name>
<organism>
    <name type="scientific">Sus scrofa</name>
    <name type="common">Pig</name>
    <dbReference type="NCBI Taxonomy" id="9823"/>
    <lineage>
        <taxon>Eukaryota</taxon>
        <taxon>Metazoa</taxon>
        <taxon>Chordata</taxon>
        <taxon>Craniata</taxon>
        <taxon>Vertebrata</taxon>
        <taxon>Euteleostomi</taxon>
        <taxon>Mammalia</taxon>
        <taxon>Eutheria</taxon>
        <taxon>Laurasiatheria</taxon>
        <taxon>Artiodactyla</taxon>
        <taxon>Suina</taxon>
        <taxon>Suidae</taxon>
        <taxon>Sus</taxon>
    </lineage>
</organism>
<feature type="chain" id="PRO_0000392073" description="Growth factor receptor-bound protein 10">
    <location>
        <begin position="1"/>
        <end position="589"/>
    </location>
</feature>
<feature type="domain" description="Ras-associating" evidence="5">
    <location>
        <begin position="161"/>
        <end position="245"/>
    </location>
</feature>
<feature type="domain" description="PH" evidence="4">
    <location>
        <begin position="285"/>
        <end position="394"/>
    </location>
</feature>
<feature type="domain" description="SH2" evidence="6">
    <location>
        <begin position="488"/>
        <end position="584"/>
    </location>
</feature>
<feature type="region of interest" description="Disordered" evidence="7">
    <location>
        <begin position="1"/>
        <end position="51"/>
    </location>
</feature>
<feature type="region of interest" description="Disordered" evidence="7">
    <location>
        <begin position="77"/>
        <end position="107"/>
    </location>
</feature>
<feature type="modified residue" description="Phosphoserine" evidence="2">
    <location>
        <position position="99"/>
    </location>
</feature>
<feature type="modified residue" description="Phosphoserine; by MTOR, MAPK1 and MAPK3" evidence="2">
    <location>
        <position position="145"/>
    </location>
</feature>
<feature type="modified residue" description="Phosphoserine; by MAPK1 and MAPK3; in vitro" evidence="2">
    <location>
        <position position="413"/>
    </location>
</feature>
<feature type="modified residue" description="Phosphoserine; by MTOR and PKB/AKT1" evidence="2">
    <location>
        <position position="423"/>
    </location>
</feature>
<feature type="modified residue" description="Phosphoserine" evidence="3">
    <location>
        <position position="426"/>
    </location>
</feature>
<feature type="modified residue" description="Phosphoserine; by MTOR, MAPK1 and MAPK3" evidence="2">
    <location>
        <position position="471"/>
    </location>
</feature>
<feature type="splice variant" id="VSP_038785" description="In isoform 2 and isoform 3." evidence="8">
    <location>
        <begin position="1"/>
        <end position="59"/>
    </location>
</feature>
<feature type="splice variant" id="VSP_038786" description="In isoform 3 and isoform 4." evidence="8">
    <original>LFLLRDSQSNPKAFVLTLCHHQKIKNFQILPCEDDGQT</original>
    <variation>RCTRLQWPSSKSLQTISAGEGVEKKEPYDPVGGIAYSI</variation>
    <location>
        <begin position="511"/>
        <end position="548"/>
    </location>
</feature>
<feature type="splice variant" id="VSP_038787" description="In isoform 3 and isoform 4." evidence="8">
    <location>
        <begin position="549"/>
        <end position="589"/>
    </location>
</feature>
<dbReference type="EMBL" id="EF174191">
    <property type="protein sequence ID" value="ABO93312.1"/>
    <property type="molecule type" value="mRNA"/>
</dbReference>
<dbReference type="EMBL" id="EF174192">
    <property type="protein sequence ID" value="ABO93313.1"/>
    <property type="molecule type" value="mRNA"/>
</dbReference>
<dbReference type="EMBL" id="EF174193">
    <property type="protein sequence ID" value="ABO93314.1"/>
    <property type="molecule type" value="mRNA"/>
</dbReference>
<dbReference type="EMBL" id="EF174194">
    <property type="protein sequence ID" value="ABO93315.1"/>
    <property type="molecule type" value="mRNA"/>
</dbReference>
<dbReference type="EMBL" id="EF174195">
    <property type="protein sequence ID" value="ABO93316.1"/>
    <property type="molecule type" value="mRNA"/>
</dbReference>
<dbReference type="EMBL" id="EF174196">
    <property type="protein sequence ID" value="ABO93317.1"/>
    <property type="molecule type" value="mRNA"/>
</dbReference>
<dbReference type="EMBL" id="EF174197">
    <property type="protein sequence ID" value="ABO93318.1"/>
    <property type="molecule type" value="mRNA"/>
</dbReference>
<dbReference type="EMBL" id="EF174198">
    <property type="protein sequence ID" value="ABO93319.1"/>
    <property type="molecule type" value="mRNA"/>
</dbReference>
<dbReference type="EMBL" id="EF174199">
    <property type="protein sequence ID" value="ABO93320.1"/>
    <property type="molecule type" value="mRNA"/>
</dbReference>
<dbReference type="RefSeq" id="NP_001128437.1">
    <molecule id="B5KFD7-1"/>
    <property type="nucleotide sequence ID" value="NM_001134965.1"/>
</dbReference>
<dbReference type="SMR" id="B5KFD7"/>
<dbReference type="FunCoup" id="B5KFD7">
    <property type="interactions" value="278"/>
</dbReference>
<dbReference type="STRING" id="9823.ENSSSCP00000031279"/>
<dbReference type="PaxDb" id="9823-ENSSSCP00000020573"/>
<dbReference type="Ensembl" id="ENSSSCT00000057201.2">
    <molecule id="B5KFD7-4"/>
    <property type="protein sequence ID" value="ENSSSCP00000057939.2"/>
    <property type="gene ID" value="ENSSSCG00000015631.5"/>
</dbReference>
<dbReference type="Ensembl" id="ENSSSCT00000060494.2">
    <molecule id="B5KFD7-1"/>
    <property type="protein sequence ID" value="ENSSSCP00000031279.1"/>
    <property type="gene ID" value="ENSSSCG00000015631.5"/>
</dbReference>
<dbReference type="Ensembl" id="ENSSSCT00015098893.1">
    <molecule id="B5KFD7-2"/>
    <property type="protein sequence ID" value="ENSSSCP00015040822.1"/>
    <property type="gene ID" value="ENSSSCG00015069263.1"/>
</dbReference>
<dbReference type="Ensembl" id="ENSSSCT00025030811.1">
    <molecule id="B5KFD7-1"/>
    <property type="protein sequence ID" value="ENSSSCP00025013000.1"/>
    <property type="gene ID" value="ENSSSCG00025021300.1"/>
</dbReference>
<dbReference type="Ensembl" id="ENSSSCT00025030952.1">
    <molecule id="B5KFD7-3"/>
    <property type="protein sequence ID" value="ENSSSCP00025013047.1"/>
    <property type="gene ID" value="ENSSSCG00025021300.1"/>
</dbReference>
<dbReference type="Ensembl" id="ENSSSCT00030019333.1">
    <molecule id="B5KFD7-1"/>
    <property type="protein sequence ID" value="ENSSSCP00030008610.1"/>
    <property type="gene ID" value="ENSSSCG00030013785.1"/>
</dbReference>
<dbReference type="Ensembl" id="ENSSSCT00030019392.1">
    <molecule id="B5KFD7-3"/>
    <property type="protein sequence ID" value="ENSSSCP00030008631.1"/>
    <property type="gene ID" value="ENSSSCG00030013785.1"/>
</dbReference>
<dbReference type="Ensembl" id="ENSSSCT00035047394.1">
    <molecule id="B5KFD7-1"/>
    <property type="protein sequence ID" value="ENSSSCP00035018961.1"/>
    <property type="gene ID" value="ENSSSCG00035035590.1"/>
</dbReference>
<dbReference type="Ensembl" id="ENSSSCT00035047412.1">
    <molecule id="B5KFD7-3"/>
    <property type="protein sequence ID" value="ENSSSCP00035018970.1"/>
    <property type="gene ID" value="ENSSSCG00035035590.1"/>
</dbReference>
<dbReference type="Ensembl" id="ENSSSCT00045013453.1">
    <molecule id="B5KFD7-1"/>
    <property type="protein sequence ID" value="ENSSSCP00045009288.1"/>
    <property type="gene ID" value="ENSSSCG00045007886.1"/>
</dbReference>
<dbReference type="Ensembl" id="ENSSSCT00045013635.1">
    <molecule id="B5KFD7-3"/>
    <property type="protein sequence ID" value="ENSSSCP00045009423.1"/>
    <property type="gene ID" value="ENSSSCG00045007886.1"/>
</dbReference>
<dbReference type="Ensembl" id="ENSSSCT00050088371.1">
    <molecule id="B5KFD7-1"/>
    <property type="protein sequence ID" value="ENSSSCP00050037878.1"/>
    <property type="gene ID" value="ENSSSCG00050064694.1"/>
</dbReference>
<dbReference type="Ensembl" id="ENSSSCT00050088439.1">
    <molecule id="B5KFD7-3"/>
    <property type="protein sequence ID" value="ENSSSCP00050037911.1"/>
    <property type="gene ID" value="ENSSSCG00050064694.1"/>
</dbReference>
<dbReference type="Ensembl" id="ENSSSCT00055016172.1">
    <molecule id="B5KFD7-1"/>
    <property type="protein sequence ID" value="ENSSSCP00055012722.1"/>
    <property type="gene ID" value="ENSSSCG00055008083.1"/>
</dbReference>
<dbReference type="Ensembl" id="ENSSSCT00055016340.1">
    <molecule id="B5KFD7-3"/>
    <property type="protein sequence ID" value="ENSSSCP00055012872.1"/>
    <property type="gene ID" value="ENSSSCG00055008083.1"/>
</dbReference>
<dbReference type="Ensembl" id="ENSSSCT00060014480.1">
    <molecule id="B5KFD7-1"/>
    <property type="protein sequence ID" value="ENSSSCP00060005616.1"/>
    <property type="gene ID" value="ENSSSCG00060010913.1"/>
</dbReference>
<dbReference type="Ensembl" id="ENSSSCT00065006754.1">
    <molecule id="B5KFD7-1"/>
    <property type="protein sequence ID" value="ENSSSCP00065002952.1"/>
    <property type="gene ID" value="ENSSSCG00065004787.1"/>
</dbReference>
<dbReference type="Ensembl" id="ENSSSCT00065006762.1">
    <molecule id="B5KFD7-3"/>
    <property type="protein sequence ID" value="ENSSSCP00065002957.1"/>
    <property type="gene ID" value="ENSSSCG00065004787.1"/>
</dbReference>
<dbReference type="Ensembl" id="ENSSSCT00070014564.1">
    <molecule id="B5KFD7-1"/>
    <property type="protein sequence ID" value="ENSSSCP00070012027.1"/>
    <property type="gene ID" value="ENSSSCG00070007353.1"/>
</dbReference>
<dbReference type="Ensembl" id="ENSSSCT00070014581.1">
    <molecule id="B5KFD7-1"/>
    <property type="protein sequence ID" value="ENSSSCP00070012040.1"/>
    <property type="gene ID" value="ENSSSCG00070007353.1"/>
</dbReference>
<dbReference type="Ensembl" id="ENSSSCT00070014664.1">
    <molecule id="B5KFD7-3"/>
    <property type="protein sequence ID" value="ENSSSCP00070012115.1"/>
    <property type="gene ID" value="ENSSSCG00070007353.1"/>
</dbReference>
<dbReference type="Ensembl" id="ENSSSCT00085009502">
    <molecule id="B5KFD7-1"/>
    <property type="protein sequence ID" value="ENSSSCP00085006869"/>
    <property type="gene ID" value="ENSSSCG00085005002"/>
</dbReference>
<dbReference type="Ensembl" id="ENSSSCT00090027303">
    <molecule id="B5KFD7-1"/>
    <property type="protein sequence ID" value="ENSSSCP00090016891"/>
    <property type="gene ID" value="ENSSSCG00090015501"/>
</dbReference>
<dbReference type="Ensembl" id="ENSSSCT00105024022">
    <molecule id="B5KFD7-1"/>
    <property type="protein sequence ID" value="ENSSSCP00105017139"/>
    <property type="gene ID" value="ENSSSCG00105012105"/>
</dbReference>
<dbReference type="Ensembl" id="ENSSSCT00115004450">
    <molecule id="B5KFD7-1"/>
    <property type="protein sequence ID" value="ENSSSCP00115004106"/>
    <property type="gene ID" value="ENSSSCG00115002638"/>
</dbReference>
<dbReference type="Ensembl" id="ENSSSCT00130077682">
    <molecule id="B5KFD7-1"/>
    <property type="protein sequence ID" value="ENSSSCP00130055590"/>
    <property type="gene ID" value="ENSSSCG00130040023"/>
</dbReference>
<dbReference type="GeneID" id="100188977"/>
<dbReference type="KEGG" id="ssc:100188977"/>
<dbReference type="CTD" id="2887"/>
<dbReference type="eggNOG" id="KOG3751">
    <property type="taxonomic scope" value="Eukaryota"/>
</dbReference>
<dbReference type="GeneTree" id="ENSGT00940000155909"/>
<dbReference type="HOGENOM" id="CLU_023207_0_1_1"/>
<dbReference type="InParanoid" id="B5KFD7"/>
<dbReference type="OMA" id="QNGQHTR"/>
<dbReference type="OrthoDB" id="6278443at2759"/>
<dbReference type="TreeFam" id="TF317511"/>
<dbReference type="Reactome" id="R-SSC-1433557">
    <property type="pathway name" value="Signaling by SCF-KIT"/>
</dbReference>
<dbReference type="Reactome" id="R-SSC-74713">
    <property type="pathway name" value="IRS activation"/>
</dbReference>
<dbReference type="Reactome" id="R-SSC-74749">
    <property type="pathway name" value="Signal attenuation"/>
</dbReference>
<dbReference type="Reactome" id="R-SSC-74751">
    <property type="pathway name" value="Insulin receptor signalling cascade"/>
</dbReference>
<dbReference type="Reactome" id="R-SSC-8853659">
    <property type="pathway name" value="RET signaling"/>
</dbReference>
<dbReference type="Reactome" id="R-SSC-9607240">
    <property type="pathway name" value="FLT3 Signaling"/>
</dbReference>
<dbReference type="Proteomes" id="UP000008227">
    <property type="component" value="Chromosome 9"/>
</dbReference>
<dbReference type="Proteomes" id="UP000314985">
    <property type="component" value="Chromosome 9"/>
</dbReference>
<dbReference type="Proteomes" id="UP000694570">
    <property type="component" value="Unplaced"/>
</dbReference>
<dbReference type="Proteomes" id="UP000694571">
    <property type="component" value="Unplaced"/>
</dbReference>
<dbReference type="Proteomes" id="UP000694720">
    <property type="component" value="Unplaced"/>
</dbReference>
<dbReference type="Proteomes" id="UP000694722">
    <property type="component" value="Unplaced"/>
</dbReference>
<dbReference type="Proteomes" id="UP000694723">
    <property type="component" value="Unplaced"/>
</dbReference>
<dbReference type="Proteomes" id="UP000694724">
    <property type="component" value="Unplaced"/>
</dbReference>
<dbReference type="Proteomes" id="UP000694725">
    <property type="component" value="Unplaced"/>
</dbReference>
<dbReference type="Proteomes" id="UP000694726">
    <property type="component" value="Unplaced"/>
</dbReference>
<dbReference type="Proteomes" id="UP000694727">
    <property type="component" value="Unplaced"/>
</dbReference>
<dbReference type="Proteomes" id="UP000694728">
    <property type="component" value="Unplaced"/>
</dbReference>
<dbReference type="Bgee" id="ENSSSCG00000015631">
    <property type="expression patterns" value="Expressed in muscle tissue and 41 other cell types or tissues"/>
</dbReference>
<dbReference type="ExpressionAtlas" id="B5KFD7">
    <property type="expression patterns" value="baseline and differential"/>
</dbReference>
<dbReference type="GO" id="GO:0005737">
    <property type="term" value="C:cytoplasm"/>
    <property type="evidence" value="ECO:0007669"/>
    <property type="project" value="UniProtKB-SubCell"/>
</dbReference>
<dbReference type="GO" id="GO:0032991">
    <property type="term" value="C:protein-containing complex"/>
    <property type="evidence" value="ECO:0007669"/>
    <property type="project" value="Ensembl"/>
</dbReference>
<dbReference type="GO" id="GO:0005158">
    <property type="term" value="F:insulin receptor binding"/>
    <property type="evidence" value="ECO:0000318"/>
    <property type="project" value="GO_Central"/>
</dbReference>
<dbReference type="GO" id="GO:0030159">
    <property type="term" value="F:signaling receptor complex adaptor activity"/>
    <property type="evidence" value="ECO:0007669"/>
    <property type="project" value="Ensembl"/>
</dbReference>
<dbReference type="GO" id="GO:0070371">
    <property type="term" value="P:ERK1 and ERK2 cascade"/>
    <property type="evidence" value="ECO:0007669"/>
    <property type="project" value="Ensembl"/>
</dbReference>
<dbReference type="GO" id="GO:0010467">
    <property type="term" value="P:gene expression"/>
    <property type="evidence" value="ECO:0007669"/>
    <property type="project" value="Ensembl"/>
</dbReference>
<dbReference type="GO" id="GO:0008286">
    <property type="term" value="P:insulin receptor signaling pathway"/>
    <property type="evidence" value="ECO:0000318"/>
    <property type="project" value="GO_Central"/>
</dbReference>
<dbReference type="GO" id="GO:0048009">
    <property type="term" value="P:insulin-like growth factor receptor signaling pathway"/>
    <property type="evidence" value="ECO:0007669"/>
    <property type="project" value="Ensembl"/>
</dbReference>
<dbReference type="GO" id="GO:0046325">
    <property type="term" value="P:negative regulation of D-glucose import"/>
    <property type="evidence" value="ECO:0007669"/>
    <property type="project" value="Ensembl"/>
</dbReference>
<dbReference type="GO" id="GO:0046627">
    <property type="term" value="P:negative regulation of insulin receptor signaling pathway"/>
    <property type="evidence" value="ECO:0000318"/>
    <property type="project" value="GO_Central"/>
</dbReference>
<dbReference type="GO" id="GO:0030178">
    <property type="term" value="P:negative regulation of Wnt signaling pathway"/>
    <property type="evidence" value="ECO:0000250"/>
    <property type="project" value="UniProtKB"/>
</dbReference>
<dbReference type="GO" id="GO:0120162">
    <property type="term" value="P:positive regulation of cold-induced thermogenesis"/>
    <property type="evidence" value="ECO:0007669"/>
    <property type="project" value="Ensembl"/>
</dbReference>
<dbReference type="GO" id="GO:0030949">
    <property type="term" value="P:positive regulation of vascular endothelial growth factor receptor signaling pathway"/>
    <property type="evidence" value="ECO:0000250"/>
    <property type="project" value="UniProtKB"/>
</dbReference>
<dbReference type="GO" id="GO:1904738">
    <property type="term" value="P:vascular associated smooth muscle cell migration"/>
    <property type="evidence" value="ECO:0007669"/>
    <property type="project" value="Ensembl"/>
</dbReference>
<dbReference type="CDD" id="cd01259">
    <property type="entry name" value="PH_APBB1IP"/>
    <property type="match status" value="1"/>
</dbReference>
<dbReference type="CDD" id="cd10415">
    <property type="entry name" value="SH2_Grb10"/>
    <property type="match status" value="1"/>
</dbReference>
<dbReference type="FunFam" id="3.30.505.10:FF:000015">
    <property type="entry name" value="Growth factor receptor-bound protein 10 isoform X1"/>
    <property type="match status" value="1"/>
</dbReference>
<dbReference type="FunFam" id="2.30.29.30:FF:000062">
    <property type="entry name" value="growth factor receptor-bound protein 10 isoform X1"/>
    <property type="match status" value="1"/>
</dbReference>
<dbReference type="FunFam" id="3.10.20.90:FF:000056">
    <property type="entry name" value="growth factor receptor-bound protein 10 isoform X1"/>
    <property type="match status" value="1"/>
</dbReference>
<dbReference type="Gene3D" id="3.10.20.90">
    <property type="entry name" value="Phosphatidylinositol 3-kinase Catalytic Subunit, Chain A, domain 1"/>
    <property type="match status" value="1"/>
</dbReference>
<dbReference type="Gene3D" id="2.30.29.30">
    <property type="entry name" value="Pleckstrin-homology domain (PH domain)/Phosphotyrosine-binding domain (PTB)"/>
    <property type="match status" value="1"/>
</dbReference>
<dbReference type="Gene3D" id="3.30.505.10">
    <property type="entry name" value="SH2 domain"/>
    <property type="match status" value="1"/>
</dbReference>
<dbReference type="InterPro" id="IPR015042">
    <property type="entry name" value="BPS-dom"/>
</dbReference>
<dbReference type="InterPro" id="IPR039664">
    <property type="entry name" value="GRB/APBB1IP"/>
</dbReference>
<dbReference type="InterPro" id="IPR035037">
    <property type="entry name" value="Grb10_SH2"/>
</dbReference>
<dbReference type="InterPro" id="IPR011993">
    <property type="entry name" value="PH-like_dom_sf"/>
</dbReference>
<dbReference type="InterPro" id="IPR039665">
    <property type="entry name" value="PH_APBB1IP"/>
</dbReference>
<dbReference type="InterPro" id="IPR001849">
    <property type="entry name" value="PH_domain"/>
</dbReference>
<dbReference type="InterPro" id="IPR000159">
    <property type="entry name" value="RA_dom"/>
</dbReference>
<dbReference type="InterPro" id="IPR000980">
    <property type="entry name" value="SH2"/>
</dbReference>
<dbReference type="InterPro" id="IPR036860">
    <property type="entry name" value="SH2_dom_sf"/>
</dbReference>
<dbReference type="InterPro" id="IPR029071">
    <property type="entry name" value="Ubiquitin-like_domsf"/>
</dbReference>
<dbReference type="PANTHER" id="PTHR11243">
    <property type="entry name" value="GROWTH FACTOR RECEPTOR-BOUND PROTEIN"/>
    <property type="match status" value="1"/>
</dbReference>
<dbReference type="PANTHER" id="PTHR11243:SF4">
    <property type="entry name" value="GROWTH FACTOR RECEPTOR-BOUND PROTEIN 10"/>
    <property type="match status" value="1"/>
</dbReference>
<dbReference type="Pfam" id="PF08947">
    <property type="entry name" value="BPS"/>
    <property type="match status" value="1"/>
</dbReference>
<dbReference type="Pfam" id="PF00169">
    <property type="entry name" value="PH"/>
    <property type="match status" value="1"/>
</dbReference>
<dbReference type="Pfam" id="PF21989">
    <property type="entry name" value="RA_2"/>
    <property type="match status" value="1"/>
</dbReference>
<dbReference type="Pfam" id="PF00017">
    <property type="entry name" value="SH2"/>
    <property type="match status" value="1"/>
</dbReference>
<dbReference type="PRINTS" id="PR00401">
    <property type="entry name" value="SH2DOMAIN"/>
</dbReference>
<dbReference type="SMART" id="SM00233">
    <property type="entry name" value="PH"/>
    <property type="match status" value="1"/>
</dbReference>
<dbReference type="SMART" id="SM00314">
    <property type="entry name" value="RA"/>
    <property type="match status" value="1"/>
</dbReference>
<dbReference type="SMART" id="SM00252">
    <property type="entry name" value="SH2"/>
    <property type="match status" value="1"/>
</dbReference>
<dbReference type="SUPFAM" id="SSF50729">
    <property type="entry name" value="PH domain-like"/>
    <property type="match status" value="1"/>
</dbReference>
<dbReference type="SUPFAM" id="SSF55550">
    <property type="entry name" value="SH2 domain"/>
    <property type="match status" value="1"/>
</dbReference>
<dbReference type="SUPFAM" id="SSF54236">
    <property type="entry name" value="Ubiquitin-like"/>
    <property type="match status" value="1"/>
</dbReference>
<dbReference type="PROSITE" id="PS50003">
    <property type="entry name" value="PH_DOMAIN"/>
    <property type="match status" value="1"/>
</dbReference>
<dbReference type="PROSITE" id="PS50200">
    <property type="entry name" value="RA"/>
    <property type="match status" value="1"/>
</dbReference>
<dbReference type="PROSITE" id="PS50001">
    <property type="entry name" value="SH2"/>
    <property type="match status" value="1"/>
</dbReference>
<reference key="1">
    <citation type="submission" date="2006-12" db="EMBL/GenBank/DDBJ databases">
        <title>Pig Grb10 is bi-alleic expressed.</title>
        <authorList>
            <person name="Nielsen A.L."/>
        </authorList>
    </citation>
    <scope>NUCLEOTIDE SEQUENCE [MRNA] (ISOFORMS 1; 2; 3 AND 4)</scope>
</reference>